<dbReference type="EC" id="4.2.1.33" evidence="1"/>
<dbReference type="EMBL" id="AE017194">
    <property type="protein sequence ID" value="AAS40452.1"/>
    <property type="molecule type" value="Genomic_DNA"/>
</dbReference>
<dbReference type="SMR" id="Q73B97"/>
<dbReference type="KEGG" id="bca:BCE_1523"/>
<dbReference type="HOGENOM" id="CLU_081378_0_3_9"/>
<dbReference type="UniPathway" id="UPA00048">
    <property type="reaction ID" value="UER00071"/>
</dbReference>
<dbReference type="Proteomes" id="UP000002527">
    <property type="component" value="Chromosome"/>
</dbReference>
<dbReference type="GO" id="GO:0009316">
    <property type="term" value="C:3-isopropylmalate dehydratase complex"/>
    <property type="evidence" value="ECO:0007669"/>
    <property type="project" value="InterPro"/>
</dbReference>
<dbReference type="GO" id="GO:0003861">
    <property type="term" value="F:3-isopropylmalate dehydratase activity"/>
    <property type="evidence" value="ECO:0007669"/>
    <property type="project" value="UniProtKB-UniRule"/>
</dbReference>
<dbReference type="GO" id="GO:0009098">
    <property type="term" value="P:L-leucine biosynthetic process"/>
    <property type="evidence" value="ECO:0007669"/>
    <property type="project" value="UniProtKB-UniRule"/>
</dbReference>
<dbReference type="CDD" id="cd01577">
    <property type="entry name" value="IPMI_Swivel"/>
    <property type="match status" value="1"/>
</dbReference>
<dbReference type="FunFam" id="3.20.19.10:FF:000003">
    <property type="entry name" value="3-isopropylmalate dehydratase small subunit"/>
    <property type="match status" value="1"/>
</dbReference>
<dbReference type="Gene3D" id="3.20.19.10">
    <property type="entry name" value="Aconitase, domain 4"/>
    <property type="match status" value="1"/>
</dbReference>
<dbReference type="HAMAP" id="MF_01031">
    <property type="entry name" value="LeuD_type1"/>
    <property type="match status" value="1"/>
</dbReference>
<dbReference type="InterPro" id="IPR004431">
    <property type="entry name" value="3-IsopropMal_deHydase_ssu"/>
</dbReference>
<dbReference type="InterPro" id="IPR015928">
    <property type="entry name" value="Aconitase/3IPM_dehydase_swvl"/>
</dbReference>
<dbReference type="InterPro" id="IPR000573">
    <property type="entry name" value="AconitaseA/IPMdHydase_ssu_swvl"/>
</dbReference>
<dbReference type="InterPro" id="IPR033940">
    <property type="entry name" value="IPMI_Swivel"/>
</dbReference>
<dbReference type="InterPro" id="IPR050075">
    <property type="entry name" value="LeuD"/>
</dbReference>
<dbReference type="NCBIfam" id="TIGR00171">
    <property type="entry name" value="leuD"/>
    <property type="match status" value="1"/>
</dbReference>
<dbReference type="NCBIfam" id="NF002458">
    <property type="entry name" value="PRK01641.1"/>
    <property type="match status" value="1"/>
</dbReference>
<dbReference type="PANTHER" id="PTHR43345:SF5">
    <property type="entry name" value="3-ISOPROPYLMALATE DEHYDRATASE SMALL SUBUNIT"/>
    <property type="match status" value="1"/>
</dbReference>
<dbReference type="PANTHER" id="PTHR43345">
    <property type="entry name" value="3-ISOPROPYLMALATE DEHYDRATASE SMALL SUBUNIT 2-RELATED-RELATED"/>
    <property type="match status" value="1"/>
</dbReference>
<dbReference type="Pfam" id="PF00694">
    <property type="entry name" value="Aconitase_C"/>
    <property type="match status" value="1"/>
</dbReference>
<dbReference type="SUPFAM" id="SSF52016">
    <property type="entry name" value="LeuD/IlvD-like"/>
    <property type="match status" value="1"/>
</dbReference>
<name>LEUD_BACC1</name>
<organism>
    <name type="scientific">Bacillus cereus (strain ATCC 10987 / NRS 248)</name>
    <dbReference type="NCBI Taxonomy" id="222523"/>
    <lineage>
        <taxon>Bacteria</taxon>
        <taxon>Bacillati</taxon>
        <taxon>Bacillota</taxon>
        <taxon>Bacilli</taxon>
        <taxon>Bacillales</taxon>
        <taxon>Bacillaceae</taxon>
        <taxon>Bacillus</taxon>
        <taxon>Bacillus cereus group</taxon>
    </lineage>
</organism>
<reference key="1">
    <citation type="journal article" date="2004" name="Nucleic Acids Res.">
        <title>The genome sequence of Bacillus cereus ATCC 10987 reveals metabolic adaptations and a large plasmid related to Bacillus anthracis pXO1.</title>
        <authorList>
            <person name="Rasko D.A."/>
            <person name="Ravel J."/>
            <person name="Oekstad O.A."/>
            <person name="Helgason E."/>
            <person name="Cer R.Z."/>
            <person name="Jiang L."/>
            <person name="Shores K.A."/>
            <person name="Fouts D.E."/>
            <person name="Tourasse N.J."/>
            <person name="Angiuoli S.V."/>
            <person name="Kolonay J.F."/>
            <person name="Nelson W.C."/>
            <person name="Kolstoe A.-B."/>
            <person name="Fraser C.M."/>
            <person name="Read T.D."/>
        </authorList>
    </citation>
    <scope>NUCLEOTIDE SEQUENCE [LARGE SCALE GENOMIC DNA]</scope>
    <source>
        <strain>ATCC 10987 / NRS 248</strain>
    </source>
</reference>
<keyword id="KW-0028">Amino-acid biosynthesis</keyword>
<keyword id="KW-0100">Branched-chain amino acid biosynthesis</keyword>
<keyword id="KW-0432">Leucine biosynthesis</keyword>
<keyword id="KW-0456">Lyase</keyword>
<accession>Q73B97</accession>
<feature type="chain" id="PRO_0000141777" description="3-isopropylmalate dehydratase small subunit">
    <location>
        <begin position="1"/>
        <end position="193"/>
    </location>
</feature>
<proteinExistence type="inferred from homology"/>
<comment type="function">
    <text evidence="1">Catalyzes the isomerization between 2-isopropylmalate and 3-isopropylmalate, via the formation of 2-isopropylmaleate.</text>
</comment>
<comment type="catalytic activity">
    <reaction evidence="1">
        <text>(2R,3S)-3-isopropylmalate = (2S)-2-isopropylmalate</text>
        <dbReference type="Rhea" id="RHEA:32287"/>
        <dbReference type="ChEBI" id="CHEBI:1178"/>
        <dbReference type="ChEBI" id="CHEBI:35121"/>
        <dbReference type="EC" id="4.2.1.33"/>
    </reaction>
</comment>
<comment type="pathway">
    <text evidence="1">Amino-acid biosynthesis; L-leucine biosynthesis; L-leucine from 3-methyl-2-oxobutanoate: step 2/4.</text>
</comment>
<comment type="subunit">
    <text evidence="1">Heterodimer of LeuC and LeuD.</text>
</comment>
<comment type="similarity">
    <text evidence="1">Belongs to the LeuD family. LeuD type 1 subfamily.</text>
</comment>
<evidence type="ECO:0000255" key="1">
    <source>
        <dbReference type="HAMAP-Rule" id="MF_01031"/>
    </source>
</evidence>
<protein>
    <recommendedName>
        <fullName evidence="1">3-isopropylmalate dehydratase small subunit</fullName>
        <ecNumber evidence="1">4.2.1.33</ecNumber>
    </recommendedName>
    <alternativeName>
        <fullName evidence="1">Alpha-IPM isomerase</fullName>
        <shortName evidence="1">IPMI</shortName>
    </alternativeName>
    <alternativeName>
        <fullName evidence="1">Isopropylmalate isomerase</fullName>
    </alternativeName>
</protein>
<gene>
    <name evidence="1" type="primary">leuD</name>
    <name type="ordered locus">BCE_1523</name>
</gene>
<sequence length="193" mass="22582">MEPFRIHKGTAAVLMNDNIDTDQIIPKQYLKRIERTGFGKYLFDEWRYDNERHENPNFPLNAPDRKGASILITGDNFGCGSSREHAPWALADYGFRVIIAGGFADIFYMNCMKNGMLPIVMDKEMREKLAKTDAREQIEVNLENEVITTSTHRFHFTIEKMWKEKLLNGLDEISITMQYEQEIKEYERMVAVY</sequence>